<dbReference type="EC" id="2.7.7.23" evidence="1"/>
<dbReference type="EC" id="2.3.1.157" evidence="1"/>
<dbReference type="EMBL" id="CP000918">
    <property type="protein sequence ID" value="ACO17463.1"/>
    <property type="molecule type" value="Genomic_DNA"/>
</dbReference>
<dbReference type="RefSeq" id="WP_000064405.1">
    <property type="nucleotide sequence ID" value="NC_012468.1"/>
</dbReference>
<dbReference type="SMR" id="C1C6W6"/>
<dbReference type="KEGG" id="snm:SP70585_1029"/>
<dbReference type="HOGENOM" id="CLU_029499_15_2_9"/>
<dbReference type="UniPathway" id="UPA00113">
    <property type="reaction ID" value="UER00532"/>
</dbReference>
<dbReference type="UniPathway" id="UPA00113">
    <property type="reaction ID" value="UER00533"/>
</dbReference>
<dbReference type="UniPathway" id="UPA00973"/>
<dbReference type="Proteomes" id="UP000002211">
    <property type="component" value="Chromosome"/>
</dbReference>
<dbReference type="GO" id="GO:0005737">
    <property type="term" value="C:cytoplasm"/>
    <property type="evidence" value="ECO:0007669"/>
    <property type="project" value="UniProtKB-SubCell"/>
</dbReference>
<dbReference type="GO" id="GO:0016020">
    <property type="term" value="C:membrane"/>
    <property type="evidence" value="ECO:0007669"/>
    <property type="project" value="GOC"/>
</dbReference>
<dbReference type="GO" id="GO:0019134">
    <property type="term" value="F:glucosamine-1-phosphate N-acetyltransferase activity"/>
    <property type="evidence" value="ECO:0007669"/>
    <property type="project" value="UniProtKB-UniRule"/>
</dbReference>
<dbReference type="GO" id="GO:0000287">
    <property type="term" value="F:magnesium ion binding"/>
    <property type="evidence" value="ECO:0007669"/>
    <property type="project" value="UniProtKB-UniRule"/>
</dbReference>
<dbReference type="GO" id="GO:0003977">
    <property type="term" value="F:UDP-N-acetylglucosamine diphosphorylase activity"/>
    <property type="evidence" value="ECO:0007669"/>
    <property type="project" value="UniProtKB-UniRule"/>
</dbReference>
<dbReference type="GO" id="GO:0000902">
    <property type="term" value="P:cell morphogenesis"/>
    <property type="evidence" value="ECO:0007669"/>
    <property type="project" value="UniProtKB-UniRule"/>
</dbReference>
<dbReference type="GO" id="GO:0071555">
    <property type="term" value="P:cell wall organization"/>
    <property type="evidence" value="ECO:0007669"/>
    <property type="project" value="UniProtKB-KW"/>
</dbReference>
<dbReference type="GO" id="GO:0009245">
    <property type="term" value="P:lipid A biosynthetic process"/>
    <property type="evidence" value="ECO:0007669"/>
    <property type="project" value="UniProtKB-UniRule"/>
</dbReference>
<dbReference type="GO" id="GO:0009252">
    <property type="term" value="P:peptidoglycan biosynthetic process"/>
    <property type="evidence" value="ECO:0007669"/>
    <property type="project" value="UniProtKB-UniRule"/>
</dbReference>
<dbReference type="GO" id="GO:0008360">
    <property type="term" value="P:regulation of cell shape"/>
    <property type="evidence" value="ECO:0007669"/>
    <property type="project" value="UniProtKB-KW"/>
</dbReference>
<dbReference type="GO" id="GO:0006048">
    <property type="term" value="P:UDP-N-acetylglucosamine biosynthetic process"/>
    <property type="evidence" value="ECO:0007669"/>
    <property type="project" value="UniProtKB-UniPathway"/>
</dbReference>
<dbReference type="CDD" id="cd02540">
    <property type="entry name" value="GT2_GlmU_N_bac"/>
    <property type="match status" value="1"/>
</dbReference>
<dbReference type="CDD" id="cd03353">
    <property type="entry name" value="LbH_GlmU_C"/>
    <property type="match status" value="1"/>
</dbReference>
<dbReference type="Gene3D" id="2.160.10.10">
    <property type="entry name" value="Hexapeptide repeat proteins"/>
    <property type="match status" value="1"/>
</dbReference>
<dbReference type="Gene3D" id="3.90.550.10">
    <property type="entry name" value="Spore Coat Polysaccharide Biosynthesis Protein SpsA, Chain A"/>
    <property type="match status" value="1"/>
</dbReference>
<dbReference type="HAMAP" id="MF_01631">
    <property type="entry name" value="GlmU"/>
    <property type="match status" value="1"/>
</dbReference>
<dbReference type="InterPro" id="IPR005882">
    <property type="entry name" value="Bifunctional_GlmU"/>
</dbReference>
<dbReference type="InterPro" id="IPR050065">
    <property type="entry name" value="GlmU-like"/>
</dbReference>
<dbReference type="InterPro" id="IPR038009">
    <property type="entry name" value="GlmU_C_LbH"/>
</dbReference>
<dbReference type="InterPro" id="IPR001451">
    <property type="entry name" value="Hexapep"/>
</dbReference>
<dbReference type="InterPro" id="IPR018357">
    <property type="entry name" value="Hexapep_transf_CS"/>
</dbReference>
<dbReference type="InterPro" id="IPR005835">
    <property type="entry name" value="NTP_transferase_dom"/>
</dbReference>
<dbReference type="InterPro" id="IPR029044">
    <property type="entry name" value="Nucleotide-diphossugar_trans"/>
</dbReference>
<dbReference type="InterPro" id="IPR011004">
    <property type="entry name" value="Trimer_LpxA-like_sf"/>
</dbReference>
<dbReference type="NCBIfam" id="TIGR01173">
    <property type="entry name" value="glmU"/>
    <property type="match status" value="1"/>
</dbReference>
<dbReference type="NCBIfam" id="NF010934">
    <property type="entry name" value="PRK14354.1"/>
    <property type="match status" value="1"/>
</dbReference>
<dbReference type="PANTHER" id="PTHR43584:SF3">
    <property type="entry name" value="BIFUNCTIONAL PROTEIN GLMU"/>
    <property type="match status" value="1"/>
</dbReference>
<dbReference type="PANTHER" id="PTHR43584">
    <property type="entry name" value="NUCLEOTIDYL TRANSFERASE"/>
    <property type="match status" value="1"/>
</dbReference>
<dbReference type="Pfam" id="PF14602">
    <property type="entry name" value="Hexapep_2"/>
    <property type="match status" value="1"/>
</dbReference>
<dbReference type="Pfam" id="PF00483">
    <property type="entry name" value="NTP_transferase"/>
    <property type="match status" value="1"/>
</dbReference>
<dbReference type="SUPFAM" id="SSF53448">
    <property type="entry name" value="Nucleotide-diphospho-sugar transferases"/>
    <property type="match status" value="1"/>
</dbReference>
<dbReference type="SUPFAM" id="SSF51161">
    <property type="entry name" value="Trimeric LpxA-like enzymes"/>
    <property type="match status" value="1"/>
</dbReference>
<dbReference type="PROSITE" id="PS00101">
    <property type="entry name" value="HEXAPEP_TRANSFERASES"/>
    <property type="match status" value="1"/>
</dbReference>
<evidence type="ECO:0000255" key="1">
    <source>
        <dbReference type="HAMAP-Rule" id="MF_01631"/>
    </source>
</evidence>
<sequence>MSNFAIILAAGKGTRMKSDLPKVLHKVAGISMLEHVFRSVGAIQPEKTVTVVGHKAELVEEVLAGQTEFVTQSEQLGTGHAVMMTEPILEGLSGHTLVIAGDTPLITGESLKNLIDFHINHKNVATILTAETDNPFGYGRIVRNDNAEVLRIVEQKDATDFEKQIKEINTGTYVFDNERLFEALKNINTNNAQGEYYITDVIGIFRETGEKVGAYTLKDFDESLGVNDRVALATAESVMRRRINHKHMVNGVSFVNPEATYIDIDVEIAPEVQIEANVTLKGQTKIGAETVLTNGTYVVDSTIGAGAVITNSMIEESSVADGVTVGPYAHIRPNSSLGAQVHIGNFVEVKGSSIGENTKAGHLTYIGNCEVGSNVNFGAGTITVNYDGKNKYKTVIGDNVFVGSNSTIIAPVELGDNSLVGAGSTITKDVPADAIAIGRSRQINKDEYATRLPHHPKNQ</sequence>
<organism>
    <name type="scientific">Streptococcus pneumoniae (strain 70585)</name>
    <dbReference type="NCBI Taxonomy" id="488221"/>
    <lineage>
        <taxon>Bacteria</taxon>
        <taxon>Bacillati</taxon>
        <taxon>Bacillota</taxon>
        <taxon>Bacilli</taxon>
        <taxon>Lactobacillales</taxon>
        <taxon>Streptococcaceae</taxon>
        <taxon>Streptococcus</taxon>
    </lineage>
</organism>
<gene>
    <name evidence="1" type="primary">glmU</name>
    <name type="ordered locus">SP70585_1029</name>
</gene>
<name>GLMU_STRP7</name>
<feature type="chain" id="PRO_1000186497" description="Bifunctional protein GlmU">
    <location>
        <begin position="1"/>
        <end position="459"/>
    </location>
</feature>
<feature type="region of interest" description="Pyrophosphorylase" evidence="1">
    <location>
        <begin position="1"/>
        <end position="229"/>
    </location>
</feature>
<feature type="region of interest" description="Linker" evidence="1">
    <location>
        <begin position="230"/>
        <end position="250"/>
    </location>
</feature>
<feature type="region of interest" description="N-acetyltransferase" evidence="1">
    <location>
        <begin position="251"/>
        <end position="459"/>
    </location>
</feature>
<feature type="active site" description="Proton acceptor" evidence="1">
    <location>
        <position position="362"/>
    </location>
</feature>
<feature type="binding site" evidence="1">
    <location>
        <begin position="8"/>
        <end position="11"/>
    </location>
    <ligand>
        <name>UDP-N-acetyl-alpha-D-glucosamine</name>
        <dbReference type="ChEBI" id="CHEBI:57705"/>
    </ligand>
</feature>
<feature type="binding site" evidence="1">
    <location>
        <position position="22"/>
    </location>
    <ligand>
        <name>UDP-N-acetyl-alpha-D-glucosamine</name>
        <dbReference type="ChEBI" id="CHEBI:57705"/>
    </ligand>
</feature>
<feature type="binding site" evidence="1">
    <location>
        <position position="72"/>
    </location>
    <ligand>
        <name>UDP-N-acetyl-alpha-D-glucosamine</name>
        <dbReference type="ChEBI" id="CHEBI:57705"/>
    </ligand>
</feature>
<feature type="binding site" evidence="1">
    <location>
        <begin position="77"/>
        <end position="78"/>
    </location>
    <ligand>
        <name>UDP-N-acetyl-alpha-D-glucosamine</name>
        <dbReference type="ChEBI" id="CHEBI:57705"/>
    </ligand>
</feature>
<feature type="binding site" evidence="1">
    <location>
        <position position="102"/>
    </location>
    <ligand>
        <name>Mg(2+)</name>
        <dbReference type="ChEBI" id="CHEBI:18420"/>
    </ligand>
</feature>
<feature type="binding site" evidence="1">
    <location>
        <position position="139"/>
    </location>
    <ligand>
        <name>UDP-N-acetyl-alpha-D-glucosamine</name>
        <dbReference type="ChEBI" id="CHEBI:57705"/>
    </ligand>
</feature>
<feature type="binding site" evidence="1">
    <location>
        <position position="154"/>
    </location>
    <ligand>
        <name>UDP-N-acetyl-alpha-D-glucosamine</name>
        <dbReference type="ChEBI" id="CHEBI:57705"/>
    </ligand>
</feature>
<feature type="binding site" evidence="1">
    <location>
        <position position="169"/>
    </location>
    <ligand>
        <name>UDP-N-acetyl-alpha-D-glucosamine</name>
        <dbReference type="ChEBI" id="CHEBI:57705"/>
    </ligand>
</feature>
<feature type="binding site" evidence="1">
    <location>
        <position position="227"/>
    </location>
    <ligand>
        <name>Mg(2+)</name>
        <dbReference type="ChEBI" id="CHEBI:18420"/>
    </ligand>
</feature>
<feature type="binding site" evidence="1">
    <location>
        <position position="227"/>
    </location>
    <ligand>
        <name>UDP-N-acetyl-alpha-D-glucosamine</name>
        <dbReference type="ChEBI" id="CHEBI:57705"/>
    </ligand>
</feature>
<feature type="binding site" evidence="1">
    <location>
        <position position="332"/>
    </location>
    <ligand>
        <name>UDP-N-acetyl-alpha-D-glucosamine</name>
        <dbReference type="ChEBI" id="CHEBI:57705"/>
    </ligand>
</feature>
<feature type="binding site" evidence="1">
    <location>
        <position position="350"/>
    </location>
    <ligand>
        <name>UDP-N-acetyl-alpha-D-glucosamine</name>
        <dbReference type="ChEBI" id="CHEBI:57705"/>
    </ligand>
</feature>
<feature type="binding site" evidence="1">
    <location>
        <position position="365"/>
    </location>
    <ligand>
        <name>UDP-N-acetyl-alpha-D-glucosamine</name>
        <dbReference type="ChEBI" id="CHEBI:57705"/>
    </ligand>
</feature>
<feature type="binding site" evidence="1">
    <location>
        <position position="376"/>
    </location>
    <ligand>
        <name>UDP-N-acetyl-alpha-D-glucosamine</name>
        <dbReference type="ChEBI" id="CHEBI:57705"/>
    </ligand>
</feature>
<feature type="binding site" evidence="1">
    <location>
        <position position="379"/>
    </location>
    <ligand>
        <name>acetyl-CoA</name>
        <dbReference type="ChEBI" id="CHEBI:57288"/>
    </ligand>
</feature>
<feature type="binding site" evidence="1">
    <location>
        <begin position="385"/>
        <end position="386"/>
    </location>
    <ligand>
        <name>acetyl-CoA</name>
        <dbReference type="ChEBI" id="CHEBI:57288"/>
    </ligand>
</feature>
<feature type="binding site" evidence="1">
    <location>
        <position position="404"/>
    </location>
    <ligand>
        <name>acetyl-CoA</name>
        <dbReference type="ChEBI" id="CHEBI:57288"/>
    </ligand>
</feature>
<feature type="binding site" evidence="1">
    <location>
        <position position="422"/>
    </location>
    <ligand>
        <name>acetyl-CoA</name>
        <dbReference type="ChEBI" id="CHEBI:57288"/>
    </ligand>
</feature>
<feature type="binding site" evidence="1">
    <location>
        <position position="439"/>
    </location>
    <ligand>
        <name>acetyl-CoA</name>
        <dbReference type="ChEBI" id="CHEBI:57288"/>
    </ligand>
</feature>
<reference key="1">
    <citation type="journal article" date="2010" name="Genome Biol.">
        <title>Structure and dynamics of the pan-genome of Streptococcus pneumoniae and closely related species.</title>
        <authorList>
            <person name="Donati C."/>
            <person name="Hiller N.L."/>
            <person name="Tettelin H."/>
            <person name="Muzzi A."/>
            <person name="Croucher N.J."/>
            <person name="Angiuoli S.V."/>
            <person name="Oggioni M."/>
            <person name="Dunning Hotopp J.C."/>
            <person name="Hu F.Z."/>
            <person name="Riley D.R."/>
            <person name="Covacci A."/>
            <person name="Mitchell T.J."/>
            <person name="Bentley S.D."/>
            <person name="Kilian M."/>
            <person name="Ehrlich G.D."/>
            <person name="Rappuoli R."/>
            <person name="Moxon E.R."/>
            <person name="Masignani V."/>
        </authorList>
    </citation>
    <scope>NUCLEOTIDE SEQUENCE [LARGE SCALE GENOMIC DNA]</scope>
    <source>
        <strain>70585</strain>
    </source>
</reference>
<proteinExistence type="inferred from homology"/>
<protein>
    <recommendedName>
        <fullName evidence="1">Bifunctional protein GlmU</fullName>
    </recommendedName>
    <domain>
        <recommendedName>
            <fullName evidence="1">UDP-N-acetylglucosamine pyrophosphorylase</fullName>
            <ecNumber evidence="1">2.7.7.23</ecNumber>
        </recommendedName>
        <alternativeName>
            <fullName evidence="1">N-acetylglucosamine-1-phosphate uridyltransferase</fullName>
        </alternativeName>
    </domain>
    <domain>
        <recommendedName>
            <fullName evidence="1">Glucosamine-1-phosphate N-acetyltransferase</fullName>
            <ecNumber evidence="1">2.3.1.157</ecNumber>
        </recommendedName>
    </domain>
</protein>
<keyword id="KW-0012">Acyltransferase</keyword>
<keyword id="KW-0133">Cell shape</keyword>
<keyword id="KW-0961">Cell wall biogenesis/degradation</keyword>
<keyword id="KW-0963">Cytoplasm</keyword>
<keyword id="KW-0460">Magnesium</keyword>
<keyword id="KW-0479">Metal-binding</keyword>
<keyword id="KW-0511">Multifunctional enzyme</keyword>
<keyword id="KW-0548">Nucleotidyltransferase</keyword>
<keyword id="KW-0573">Peptidoglycan synthesis</keyword>
<keyword id="KW-0677">Repeat</keyword>
<keyword id="KW-0808">Transferase</keyword>
<comment type="function">
    <text evidence="1">Catalyzes the last two sequential reactions in the de novo biosynthetic pathway for UDP-N-acetylglucosamine (UDP-GlcNAc). The C-terminal domain catalyzes the transfer of acetyl group from acetyl coenzyme A to glucosamine-1-phosphate (GlcN-1-P) to produce N-acetylglucosamine-1-phosphate (GlcNAc-1-P), which is converted into UDP-GlcNAc by the transfer of uridine 5-monophosphate (from uridine 5-triphosphate), a reaction catalyzed by the N-terminal domain.</text>
</comment>
<comment type="catalytic activity">
    <reaction evidence="1">
        <text>alpha-D-glucosamine 1-phosphate + acetyl-CoA = N-acetyl-alpha-D-glucosamine 1-phosphate + CoA + H(+)</text>
        <dbReference type="Rhea" id="RHEA:13725"/>
        <dbReference type="ChEBI" id="CHEBI:15378"/>
        <dbReference type="ChEBI" id="CHEBI:57287"/>
        <dbReference type="ChEBI" id="CHEBI:57288"/>
        <dbReference type="ChEBI" id="CHEBI:57776"/>
        <dbReference type="ChEBI" id="CHEBI:58516"/>
        <dbReference type="EC" id="2.3.1.157"/>
    </reaction>
</comment>
<comment type="catalytic activity">
    <reaction evidence="1">
        <text>N-acetyl-alpha-D-glucosamine 1-phosphate + UTP + H(+) = UDP-N-acetyl-alpha-D-glucosamine + diphosphate</text>
        <dbReference type="Rhea" id="RHEA:13509"/>
        <dbReference type="ChEBI" id="CHEBI:15378"/>
        <dbReference type="ChEBI" id="CHEBI:33019"/>
        <dbReference type="ChEBI" id="CHEBI:46398"/>
        <dbReference type="ChEBI" id="CHEBI:57705"/>
        <dbReference type="ChEBI" id="CHEBI:57776"/>
        <dbReference type="EC" id="2.7.7.23"/>
    </reaction>
</comment>
<comment type="cofactor">
    <cofactor evidence="1">
        <name>Mg(2+)</name>
        <dbReference type="ChEBI" id="CHEBI:18420"/>
    </cofactor>
    <text evidence="1">Binds 1 Mg(2+) ion per subunit.</text>
</comment>
<comment type="pathway">
    <text evidence="1">Nucleotide-sugar biosynthesis; UDP-N-acetyl-alpha-D-glucosamine biosynthesis; N-acetyl-alpha-D-glucosamine 1-phosphate from alpha-D-glucosamine 6-phosphate (route II): step 2/2.</text>
</comment>
<comment type="pathway">
    <text evidence="1">Nucleotide-sugar biosynthesis; UDP-N-acetyl-alpha-D-glucosamine biosynthesis; UDP-N-acetyl-alpha-D-glucosamine from N-acetyl-alpha-D-glucosamine 1-phosphate: step 1/1.</text>
</comment>
<comment type="pathway">
    <text evidence="1">Bacterial outer membrane biogenesis; LPS lipid A biosynthesis.</text>
</comment>
<comment type="subunit">
    <text evidence="1">Homotrimer.</text>
</comment>
<comment type="subcellular location">
    <subcellularLocation>
        <location evidence="1">Cytoplasm</location>
    </subcellularLocation>
</comment>
<comment type="similarity">
    <text evidence="1">In the N-terminal section; belongs to the N-acetylglucosamine-1-phosphate uridyltransferase family.</text>
</comment>
<comment type="similarity">
    <text evidence="1">In the C-terminal section; belongs to the transferase hexapeptide repeat family.</text>
</comment>
<accession>C1C6W6</accession>